<accession>Q0TAX8</accession>
<dbReference type="EMBL" id="CP000247">
    <property type="protein sequence ID" value="ABG71901.1"/>
    <property type="molecule type" value="Genomic_DNA"/>
</dbReference>
<dbReference type="RefSeq" id="WP_001251965.1">
    <property type="nucleotide sequence ID" value="NC_008253.1"/>
</dbReference>
<dbReference type="SMR" id="Q0TAX8"/>
<dbReference type="KEGG" id="ecp:ECP_3930"/>
<dbReference type="HOGENOM" id="CLU_084338_2_0_6"/>
<dbReference type="Proteomes" id="UP000009182">
    <property type="component" value="Chromosome"/>
</dbReference>
<dbReference type="GO" id="GO:0005886">
    <property type="term" value="C:plasma membrane"/>
    <property type="evidence" value="ECO:0007669"/>
    <property type="project" value="UniProtKB-SubCell"/>
</dbReference>
<dbReference type="GO" id="GO:0045259">
    <property type="term" value="C:proton-transporting ATP synthase complex"/>
    <property type="evidence" value="ECO:0007669"/>
    <property type="project" value="UniProtKB-KW"/>
</dbReference>
<dbReference type="GO" id="GO:0005524">
    <property type="term" value="F:ATP binding"/>
    <property type="evidence" value="ECO:0007669"/>
    <property type="project" value="UniProtKB-UniRule"/>
</dbReference>
<dbReference type="GO" id="GO:0046933">
    <property type="term" value="F:proton-transporting ATP synthase activity, rotational mechanism"/>
    <property type="evidence" value="ECO:0007669"/>
    <property type="project" value="UniProtKB-UniRule"/>
</dbReference>
<dbReference type="CDD" id="cd12152">
    <property type="entry name" value="F1-ATPase_delta"/>
    <property type="match status" value="1"/>
</dbReference>
<dbReference type="FunFam" id="1.20.5.440:FF:000001">
    <property type="entry name" value="ATP synthase epsilon chain"/>
    <property type="match status" value="1"/>
</dbReference>
<dbReference type="FunFam" id="2.60.15.10:FF:000001">
    <property type="entry name" value="ATP synthase epsilon chain"/>
    <property type="match status" value="1"/>
</dbReference>
<dbReference type="Gene3D" id="1.20.5.440">
    <property type="entry name" value="ATP synthase delta/epsilon subunit, C-terminal domain"/>
    <property type="match status" value="1"/>
</dbReference>
<dbReference type="Gene3D" id="2.60.15.10">
    <property type="entry name" value="F0F1 ATP synthase delta/epsilon subunit, N-terminal"/>
    <property type="match status" value="1"/>
</dbReference>
<dbReference type="HAMAP" id="MF_00530">
    <property type="entry name" value="ATP_synth_epsil_bac"/>
    <property type="match status" value="1"/>
</dbReference>
<dbReference type="InterPro" id="IPR036794">
    <property type="entry name" value="ATP_F1_dsu/esu_C_sf"/>
</dbReference>
<dbReference type="InterPro" id="IPR001469">
    <property type="entry name" value="ATP_synth_F1_dsu/esu"/>
</dbReference>
<dbReference type="InterPro" id="IPR020546">
    <property type="entry name" value="ATP_synth_F1_dsu/esu_N"/>
</dbReference>
<dbReference type="InterPro" id="IPR020547">
    <property type="entry name" value="ATP_synth_F1_esu_C"/>
</dbReference>
<dbReference type="InterPro" id="IPR036771">
    <property type="entry name" value="ATPsynth_dsu/esu_N"/>
</dbReference>
<dbReference type="NCBIfam" id="TIGR01216">
    <property type="entry name" value="ATP_synt_epsi"/>
    <property type="match status" value="1"/>
</dbReference>
<dbReference type="NCBIfam" id="NF001847">
    <property type="entry name" value="PRK00571.1-4"/>
    <property type="match status" value="1"/>
</dbReference>
<dbReference type="PANTHER" id="PTHR13822">
    <property type="entry name" value="ATP SYNTHASE DELTA/EPSILON CHAIN"/>
    <property type="match status" value="1"/>
</dbReference>
<dbReference type="PANTHER" id="PTHR13822:SF10">
    <property type="entry name" value="ATP SYNTHASE EPSILON CHAIN, CHLOROPLASTIC"/>
    <property type="match status" value="1"/>
</dbReference>
<dbReference type="Pfam" id="PF00401">
    <property type="entry name" value="ATP-synt_DE"/>
    <property type="match status" value="1"/>
</dbReference>
<dbReference type="Pfam" id="PF02823">
    <property type="entry name" value="ATP-synt_DE_N"/>
    <property type="match status" value="1"/>
</dbReference>
<dbReference type="SUPFAM" id="SSF46604">
    <property type="entry name" value="Epsilon subunit of F1F0-ATP synthase C-terminal domain"/>
    <property type="match status" value="1"/>
</dbReference>
<dbReference type="SUPFAM" id="SSF51344">
    <property type="entry name" value="Epsilon subunit of F1F0-ATP synthase N-terminal domain"/>
    <property type="match status" value="1"/>
</dbReference>
<organism>
    <name type="scientific">Escherichia coli O6:K15:H31 (strain 536 / UPEC)</name>
    <dbReference type="NCBI Taxonomy" id="362663"/>
    <lineage>
        <taxon>Bacteria</taxon>
        <taxon>Pseudomonadati</taxon>
        <taxon>Pseudomonadota</taxon>
        <taxon>Gammaproteobacteria</taxon>
        <taxon>Enterobacterales</taxon>
        <taxon>Enterobacteriaceae</taxon>
        <taxon>Escherichia</taxon>
    </lineage>
</organism>
<keyword id="KW-0066">ATP synthesis</keyword>
<keyword id="KW-0997">Cell inner membrane</keyword>
<keyword id="KW-1003">Cell membrane</keyword>
<keyword id="KW-0139">CF(1)</keyword>
<keyword id="KW-0375">Hydrogen ion transport</keyword>
<keyword id="KW-0406">Ion transport</keyword>
<keyword id="KW-0472">Membrane</keyword>
<keyword id="KW-0813">Transport</keyword>
<sequence>MAMTYHLDVVSAEQQMFSGLVEKIQVTGSEGELGIYPGHAPLLTAIKPGMIRIVKQHGHEEFIYLSGGILEVQPGNVTVLADTAIRGQDLDEARAMEAKRKAEEHISSSHGDVDYAQASAELAKAIAQLRVIELTKKAM</sequence>
<feature type="chain" id="PRO_0000265811" description="ATP synthase epsilon chain">
    <location>
        <begin position="1"/>
        <end position="139"/>
    </location>
</feature>
<protein>
    <recommendedName>
        <fullName evidence="1">ATP synthase epsilon chain</fullName>
    </recommendedName>
    <alternativeName>
        <fullName evidence="1">ATP synthase F1 sector epsilon subunit</fullName>
    </alternativeName>
    <alternativeName>
        <fullName evidence="1">F-ATPase epsilon subunit</fullName>
    </alternativeName>
</protein>
<evidence type="ECO:0000255" key="1">
    <source>
        <dbReference type="HAMAP-Rule" id="MF_00530"/>
    </source>
</evidence>
<name>ATPE_ECOL5</name>
<reference key="1">
    <citation type="journal article" date="2006" name="Mol. Microbiol.">
        <title>Role of pathogenicity island-associated integrases in the genome plasticity of uropathogenic Escherichia coli strain 536.</title>
        <authorList>
            <person name="Hochhut B."/>
            <person name="Wilde C."/>
            <person name="Balling G."/>
            <person name="Middendorf B."/>
            <person name="Dobrindt U."/>
            <person name="Brzuszkiewicz E."/>
            <person name="Gottschalk G."/>
            <person name="Carniel E."/>
            <person name="Hacker J."/>
        </authorList>
    </citation>
    <scope>NUCLEOTIDE SEQUENCE [LARGE SCALE GENOMIC DNA]</scope>
    <source>
        <strain>536 / UPEC</strain>
    </source>
</reference>
<proteinExistence type="inferred from homology"/>
<comment type="function">
    <text evidence="1">Produces ATP from ADP in the presence of a proton gradient across the membrane.</text>
</comment>
<comment type="subunit">
    <text>F-type ATPases have 2 components, CF(1) - the catalytic core - and CF(0) - the membrane proton channel. CF(1) has five subunits: alpha(3), beta(3), gamma(1), delta(1), epsilon(1). CF(0) has three main subunits: a, b and c.</text>
</comment>
<comment type="subcellular location">
    <subcellularLocation>
        <location evidence="1">Cell inner membrane</location>
        <topology evidence="1">Peripheral membrane protein</topology>
    </subcellularLocation>
</comment>
<comment type="similarity">
    <text evidence="1">Belongs to the ATPase epsilon chain family.</text>
</comment>
<gene>
    <name evidence="1" type="primary">atpC</name>
    <name type="ordered locus">ECP_3930</name>
</gene>